<proteinExistence type="evidence at transcript level"/>
<comment type="function">
    <text evidence="1">Blocks the elongation and depolymerization of the actin filaments at the pointed end. The Tmod/TM complex contributes to the formation of the short actin protofilament, which in turn defines the geometry of the membrane skeleton (By similarity).</text>
</comment>
<comment type="subunit">
    <text evidence="1">Binds to the N-terminus of tropomyosin and to actin.</text>
</comment>
<comment type="subcellular location">
    <subcellularLocation>
        <location evidence="2">Cytoplasm</location>
        <location evidence="2">Cytoskeleton</location>
    </subcellularLocation>
    <text evidence="2">In myofibrils with sarcomeric structure, localizes to the pointed end of actin thin filaments.</text>
</comment>
<comment type="similarity">
    <text evidence="4">Belongs to the tropomodulin family.</text>
</comment>
<organism>
    <name type="scientific">Mus musculus</name>
    <name type="common">Mouse</name>
    <dbReference type="NCBI Taxonomy" id="10090"/>
    <lineage>
        <taxon>Eukaryota</taxon>
        <taxon>Metazoa</taxon>
        <taxon>Chordata</taxon>
        <taxon>Craniata</taxon>
        <taxon>Vertebrata</taxon>
        <taxon>Euteleostomi</taxon>
        <taxon>Mammalia</taxon>
        <taxon>Eutheria</taxon>
        <taxon>Euarchontoglires</taxon>
        <taxon>Glires</taxon>
        <taxon>Rodentia</taxon>
        <taxon>Myomorpha</taxon>
        <taxon>Muroidea</taxon>
        <taxon>Muridae</taxon>
        <taxon>Murinae</taxon>
        <taxon>Mus</taxon>
        <taxon>Mus</taxon>
    </lineage>
</organism>
<name>TMOD4_MOUSE</name>
<sequence>MSSYQKELEKYRDIDEDEILRTLSPEELEQLDCELQEMDPENMLLPAGLRQRDQTKKSPTGPLDRDALLQYLEQQALEVKERDDLVPYTGEKKGKPFIQPKREIPAQEQITLEPELEEALSHATDAEMCDIAAILGMYTLMSNKQYYDAICSGEICNTEGISSVVQPDKYKPVPDEPPNPTNIEEMLKRVRSNDKELEEVNLNNIQDIPIPVLSDLCEAMKTNTYVRSFSLVATKSGDPIANAVADMLRENRSLQSLNIESNFISSTGLMAVLKAVRENATLTELRVDNQRQWPGDAVEMEMATVLEQCPSIVRFGYHFTQQGPRARAAHAMTRNNELRRQQKKR</sequence>
<evidence type="ECO:0000250" key="1"/>
<evidence type="ECO:0000250" key="2">
    <source>
        <dbReference type="UniProtKB" id="Q9NZQ9"/>
    </source>
</evidence>
<evidence type="ECO:0000256" key="3">
    <source>
        <dbReference type="SAM" id="MobiDB-lite"/>
    </source>
</evidence>
<evidence type="ECO:0000305" key="4"/>
<gene>
    <name type="primary">Tmod4</name>
</gene>
<feature type="chain" id="PRO_0000186137" description="Tropomodulin-4">
    <location>
        <begin position="1"/>
        <end position="345"/>
    </location>
</feature>
<feature type="region of interest" description="Disordered" evidence="3">
    <location>
        <begin position="40"/>
        <end position="64"/>
    </location>
</feature>
<feature type="region of interest" description="Disordered" evidence="3">
    <location>
        <begin position="326"/>
        <end position="345"/>
    </location>
</feature>
<feature type="compositionally biased region" description="Basic and acidic residues" evidence="3">
    <location>
        <begin position="336"/>
        <end position="345"/>
    </location>
</feature>
<reference key="1">
    <citation type="journal article" date="2000" name="Genomics">
        <title>Sequencing, expression analysis, and mapping of three unique human tropomodulin genes and their mouse orthologs.</title>
        <authorList>
            <person name="Cox P.R."/>
            <person name="Zoghbi H.Y."/>
        </authorList>
    </citation>
    <scope>NUCLEOTIDE SEQUENCE [MRNA]</scope>
    <source>
        <strain>C57BL/6J</strain>
    </source>
</reference>
<reference key="2">
    <citation type="journal article" date="2004" name="Genome Res.">
        <title>The status, quality, and expansion of the NIH full-length cDNA project: the Mammalian Gene Collection (MGC).</title>
        <authorList>
            <consortium name="The MGC Project Team"/>
        </authorList>
    </citation>
    <scope>NUCLEOTIDE SEQUENCE [LARGE SCALE MRNA]</scope>
    <source>
        <tissue>Bone</tissue>
        <tissue>Limb</tissue>
    </source>
</reference>
<protein>
    <recommendedName>
        <fullName>Tropomodulin-4</fullName>
    </recommendedName>
    <alternativeName>
        <fullName>Skeletal muscle tropomodulin</fullName>
        <shortName>Sk-Tmod</shortName>
    </alternativeName>
</protein>
<keyword id="KW-0009">Actin-binding</keyword>
<keyword id="KW-0963">Cytoplasm</keyword>
<keyword id="KW-0206">Cytoskeleton</keyword>
<keyword id="KW-1185">Reference proteome</keyword>
<dbReference type="EMBL" id="AF177174">
    <property type="protein sequence ID" value="AAF31673.1"/>
    <property type="molecule type" value="mRNA"/>
</dbReference>
<dbReference type="EMBL" id="BC068020">
    <property type="protein sequence ID" value="AAH68020.1"/>
    <property type="molecule type" value="mRNA"/>
</dbReference>
<dbReference type="CCDS" id="CCDS17601.1"/>
<dbReference type="RefSeq" id="NP_001415718.1">
    <property type="nucleotide sequence ID" value="NM_001428789.1"/>
</dbReference>
<dbReference type="RefSeq" id="NP_001415719.1">
    <property type="nucleotide sequence ID" value="NM_001428790.1"/>
</dbReference>
<dbReference type="RefSeq" id="NP_057921.1">
    <property type="nucleotide sequence ID" value="NM_016712.5"/>
</dbReference>
<dbReference type="RefSeq" id="XP_017175125.1">
    <property type="nucleotide sequence ID" value="XM_017319636.1"/>
</dbReference>
<dbReference type="RefSeq" id="XP_030108531.1">
    <property type="nucleotide sequence ID" value="XM_030252671.2"/>
</dbReference>
<dbReference type="SMR" id="Q9JLH8"/>
<dbReference type="FunCoup" id="Q9JLH8">
    <property type="interactions" value="68"/>
</dbReference>
<dbReference type="STRING" id="10090.ENSMUSP00000102846"/>
<dbReference type="PhosphoSitePlus" id="Q9JLH8"/>
<dbReference type="jPOST" id="Q9JLH8"/>
<dbReference type="PaxDb" id="10090-ENSMUSP00000005769"/>
<dbReference type="ProteomicsDB" id="260708"/>
<dbReference type="Antibodypedia" id="34056">
    <property type="antibodies" value="162 antibodies from 26 providers"/>
</dbReference>
<dbReference type="DNASU" id="50874"/>
<dbReference type="Ensembl" id="ENSMUST00000005769.13">
    <property type="protein sequence ID" value="ENSMUSP00000005769.7"/>
    <property type="gene ID" value="ENSMUSG00000005628.13"/>
</dbReference>
<dbReference type="Ensembl" id="ENSMUST00000107227.4">
    <property type="protein sequence ID" value="ENSMUSP00000102846.2"/>
    <property type="gene ID" value="ENSMUSG00000005628.13"/>
</dbReference>
<dbReference type="GeneID" id="50874"/>
<dbReference type="KEGG" id="mmu:50874"/>
<dbReference type="UCSC" id="uc008qib.1">
    <property type="organism name" value="mouse"/>
</dbReference>
<dbReference type="AGR" id="MGI:1355285"/>
<dbReference type="CTD" id="29765"/>
<dbReference type="MGI" id="MGI:1355285">
    <property type="gene designation" value="Tmod4"/>
</dbReference>
<dbReference type="VEuPathDB" id="HostDB:ENSMUSG00000005628"/>
<dbReference type="eggNOG" id="KOG3735">
    <property type="taxonomic scope" value="Eukaryota"/>
</dbReference>
<dbReference type="GeneTree" id="ENSGT00940000158734"/>
<dbReference type="HOGENOM" id="CLU_031052_0_1_1"/>
<dbReference type="InParanoid" id="Q9JLH8"/>
<dbReference type="OMA" id="SDAEMCD"/>
<dbReference type="OrthoDB" id="2163268at2759"/>
<dbReference type="PhylomeDB" id="Q9JLH8"/>
<dbReference type="TreeFam" id="TF315841"/>
<dbReference type="Reactome" id="R-MMU-390522">
    <property type="pathway name" value="Striated Muscle Contraction"/>
</dbReference>
<dbReference type="BioGRID-ORCS" id="50874">
    <property type="hits" value="1 hit in 77 CRISPR screens"/>
</dbReference>
<dbReference type="ChiTaRS" id="Tmod4">
    <property type="organism name" value="mouse"/>
</dbReference>
<dbReference type="PRO" id="PR:Q9JLH8"/>
<dbReference type="Proteomes" id="UP000000589">
    <property type="component" value="Chromosome 3"/>
</dbReference>
<dbReference type="RNAct" id="Q9JLH8">
    <property type="molecule type" value="protein"/>
</dbReference>
<dbReference type="Bgee" id="ENSMUSG00000005628">
    <property type="expression patterns" value="Expressed in muscle of arm and 124 other cell types or tissues"/>
</dbReference>
<dbReference type="ExpressionAtlas" id="Q9JLH8">
    <property type="expression patterns" value="baseline and differential"/>
</dbReference>
<dbReference type="GO" id="GO:0005865">
    <property type="term" value="C:striated muscle thin filament"/>
    <property type="evidence" value="ECO:0000314"/>
    <property type="project" value="MGI"/>
</dbReference>
<dbReference type="GO" id="GO:0003779">
    <property type="term" value="F:actin binding"/>
    <property type="evidence" value="ECO:0007669"/>
    <property type="project" value="UniProtKB-KW"/>
</dbReference>
<dbReference type="GO" id="GO:0005523">
    <property type="term" value="F:tropomyosin binding"/>
    <property type="evidence" value="ECO:0000314"/>
    <property type="project" value="MGI"/>
</dbReference>
<dbReference type="GO" id="GO:0051694">
    <property type="term" value="P:pointed-end actin filament capping"/>
    <property type="evidence" value="ECO:0007669"/>
    <property type="project" value="InterPro"/>
</dbReference>
<dbReference type="FunFam" id="3.80.10.10:FF:000006">
    <property type="entry name" value="Tropomodulin 2"/>
    <property type="match status" value="1"/>
</dbReference>
<dbReference type="Gene3D" id="3.80.10.10">
    <property type="entry name" value="Ribonuclease Inhibitor"/>
    <property type="match status" value="1"/>
</dbReference>
<dbReference type="InterPro" id="IPR032675">
    <property type="entry name" value="LRR_dom_sf"/>
</dbReference>
<dbReference type="InterPro" id="IPR004934">
    <property type="entry name" value="TMOD"/>
</dbReference>
<dbReference type="PANTHER" id="PTHR10901">
    <property type="entry name" value="TROPOMODULIN"/>
    <property type="match status" value="1"/>
</dbReference>
<dbReference type="PANTHER" id="PTHR10901:SF9">
    <property type="entry name" value="TROPOMODULIN-4"/>
    <property type="match status" value="1"/>
</dbReference>
<dbReference type="Pfam" id="PF03250">
    <property type="entry name" value="Tropomodulin"/>
    <property type="match status" value="1"/>
</dbReference>
<dbReference type="SUPFAM" id="SSF52047">
    <property type="entry name" value="RNI-like"/>
    <property type="match status" value="1"/>
</dbReference>
<accession>Q9JLH8</accession>